<reference key="1">
    <citation type="journal article" date="2000" name="Genes Dev.">
        <title>Unproductively spliced ribosomal protein mRNAs are natural targets of mRNA surveillance in C. elegans.</title>
        <authorList>
            <person name="Mitrovich Q.M."/>
            <person name="Anderson P."/>
        </authorList>
    </citation>
    <scope>NUCLEOTIDE SEQUENCE [GENOMIC DNA]</scope>
</reference>
<keyword id="KW-0687">Ribonucleoprotein</keyword>
<keyword id="KW-0689">Ribosomal protein</keyword>
<name>RL10A_CAERE</name>
<accession>Q9NBJ7</accession>
<organism>
    <name type="scientific">Caenorhabditis remanei</name>
    <name type="common">Caenorhabditis vulgaris</name>
    <dbReference type="NCBI Taxonomy" id="31234"/>
    <lineage>
        <taxon>Eukaryota</taxon>
        <taxon>Metazoa</taxon>
        <taxon>Ecdysozoa</taxon>
        <taxon>Nematoda</taxon>
        <taxon>Chromadorea</taxon>
        <taxon>Rhabditida</taxon>
        <taxon>Rhabditina</taxon>
        <taxon>Rhabditomorpha</taxon>
        <taxon>Rhabditoidea</taxon>
        <taxon>Rhabditidae</taxon>
        <taxon>Peloderinae</taxon>
        <taxon>Caenorhabditis</taxon>
    </lineage>
</organism>
<gene>
    <name type="primary">rpl-10a</name>
</gene>
<feature type="chain" id="PRO_0000125827" description="Large ribosomal subunit protein uL1">
    <location>
        <begin position="1" status="less than"/>
        <end position="112" status="greater than"/>
    </location>
</feature>
<feature type="non-terminal residue">
    <location>
        <position position="1"/>
    </location>
</feature>
<feature type="non-terminal residue">
    <location>
        <position position="112"/>
    </location>
</feature>
<dbReference type="EMBL" id="AF247854">
    <property type="protein sequence ID" value="AAF77035.1"/>
    <property type="molecule type" value="Genomic_DNA"/>
</dbReference>
<dbReference type="SMR" id="Q9NBJ7"/>
<dbReference type="eggNOG" id="KOG1570">
    <property type="taxonomic scope" value="Eukaryota"/>
</dbReference>
<dbReference type="HOGENOM" id="CLU_062853_3_0_1"/>
<dbReference type="GO" id="GO:1990904">
    <property type="term" value="C:ribonucleoprotein complex"/>
    <property type="evidence" value="ECO:0007669"/>
    <property type="project" value="UniProtKB-KW"/>
</dbReference>
<dbReference type="GO" id="GO:0005840">
    <property type="term" value="C:ribosome"/>
    <property type="evidence" value="ECO:0007669"/>
    <property type="project" value="UniProtKB-KW"/>
</dbReference>
<dbReference type="GO" id="GO:0003723">
    <property type="term" value="F:RNA binding"/>
    <property type="evidence" value="ECO:0007669"/>
    <property type="project" value="InterPro"/>
</dbReference>
<dbReference type="CDD" id="cd00403">
    <property type="entry name" value="Ribosomal_L1"/>
    <property type="match status" value="1"/>
</dbReference>
<dbReference type="FunFam" id="3.40.50.790:FF:000002">
    <property type="entry name" value="Ribosomal protein"/>
    <property type="match status" value="1"/>
</dbReference>
<dbReference type="Gene3D" id="3.40.50.790">
    <property type="match status" value="1"/>
</dbReference>
<dbReference type="InterPro" id="IPR050257">
    <property type="entry name" value="eL8/uL1-like"/>
</dbReference>
<dbReference type="InterPro" id="IPR023674">
    <property type="entry name" value="Ribosomal_uL1-like"/>
</dbReference>
<dbReference type="InterPro" id="IPR028364">
    <property type="entry name" value="Ribosomal_uL1/biogenesis"/>
</dbReference>
<dbReference type="InterPro" id="IPR016095">
    <property type="entry name" value="Ribosomal_uL1_3-a/b-sand"/>
</dbReference>
<dbReference type="InterPro" id="IPR023673">
    <property type="entry name" value="Ribosomal_uL1_CS"/>
</dbReference>
<dbReference type="PANTHER" id="PTHR23105">
    <property type="entry name" value="RIBOSOMAL PROTEIN L7AE FAMILY MEMBER"/>
    <property type="match status" value="1"/>
</dbReference>
<dbReference type="Pfam" id="PF00687">
    <property type="entry name" value="Ribosomal_L1"/>
    <property type="match status" value="1"/>
</dbReference>
<dbReference type="SUPFAM" id="SSF56808">
    <property type="entry name" value="Ribosomal protein L1"/>
    <property type="match status" value="1"/>
</dbReference>
<dbReference type="PROSITE" id="PS01199">
    <property type="entry name" value="RIBOSOMAL_L1"/>
    <property type="match status" value="1"/>
</dbReference>
<proteinExistence type="inferred from homology"/>
<protein>
    <recommendedName>
        <fullName evidence="1">Large ribosomal subunit protein uL1</fullName>
    </recommendedName>
    <alternativeName>
        <fullName>60S ribosomal protein L10a</fullName>
    </alternativeName>
</protein>
<sequence>SGSIRLKHIPRPSMKVCVFGDQHHLDEAAAGNIPAMSADDLKKLNKQKKLIKKLAKSYDAFIASESLIKQIPRILGPGLNKAGKFPSVVTHGESLQSKSDEIRATVKFQMKK</sequence>
<comment type="similarity">
    <text evidence="1">Belongs to the universal ribosomal protein uL1 family.</text>
</comment>
<evidence type="ECO:0000305" key="1"/>